<gene>
    <name evidence="1" type="primary">hcaF</name>
    <name type="ordered locus">EcE24377A_2824</name>
</gene>
<keyword id="KW-0058">Aromatic hydrocarbons catabolism</keyword>
<keyword id="KW-0223">Dioxygenase</keyword>
<keyword id="KW-0520">NAD</keyword>
<keyword id="KW-0560">Oxidoreductase</keyword>
<keyword id="KW-1185">Reference proteome</keyword>
<sequence>MSAQVSLELHHRISQFLFHEASLLDDWKFRDWLAQLDEEIRYTMRTTVNAQTRDRRKGVQPPTTWIFNDTKDQLERRIARLETGMAWAEEPPSRTRHLISNCQISETDIPNVFAVRVNYLLYRAQKERDETFYVGTRFDKVRRLEDDNWRLLERDIVLDQAVITSHNLSVLF</sequence>
<feature type="chain" id="PRO_0000333710" description="3-phenylpropionate/cinnamic acid dioxygenase subunit beta">
    <location>
        <begin position="1"/>
        <end position="172"/>
    </location>
</feature>
<dbReference type="EC" id="1.14.12.19" evidence="1"/>
<dbReference type="EMBL" id="CP000800">
    <property type="protein sequence ID" value="ABV20129.1"/>
    <property type="molecule type" value="Genomic_DNA"/>
</dbReference>
<dbReference type="RefSeq" id="WP_001276072.1">
    <property type="nucleotide sequence ID" value="NC_009801.1"/>
</dbReference>
<dbReference type="SMR" id="A7ZPY2"/>
<dbReference type="GeneID" id="75206232"/>
<dbReference type="KEGG" id="ecw:EcE24377A_2824"/>
<dbReference type="HOGENOM" id="CLU_102527_1_1_6"/>
<dbReference type="UniPathway" id="UPA00714"/>
<dbReference type="Proteomes" id="UP000001122">
    <property type="component" value="Chromosome"/>
</dbReference>
<dbReference type="GO" id="GO:0008695">
    <property type="term" value="F:3-phenylpropionate dioxygenase activity"/>
    <property type="evidence" value="ECO:0007669"/>
    <property type="project" value="UniProtKB-UniRule"/>
</dbReference>
<dbReference type="GO" id="GO:0019380">
    <property type="term" value="P:3-phenylpropionate catabolic process"/>
    <property type="evidence" value="ECO:0007669"/>
    <property type="project" value="UniProtKB-UniRule"/>
</dbReference>
<dbReference type="CDD" id="cd00667">
    <property type="entry name" value="ring_hydroxylating_dioxygenases_beta"/>
    <property type="match status" value="1"/>
</dbReference>
<dbReference type="FunFam" id="3.10.450.50:FF:000008">
    <property type="entry name" value="3-phenylpropionate/cinnamic acid dioxygenase subunit beta"/>
    <property type="match status" value="1"/>
</dbReference>
<dbReference type="Gene3D" id="3.10.450.50">
    <property type="match status" value="1"/>
</dbReference>
<dbReference type="HAMAP" id="MF_01649">
    <property type="entry name" value="HcaF"/>
    <property type="match status" value="1"/>
</dbReference>
<dbReference type="InterPro" id="IPR054881">
    <property type="entry name" value="3PPDioc_HcaF"/>
</dbReference>
<dbReference type="InterPro" id="IPR023712">
    <property type="entry name" value="HcaF"/>
</dbReference>
<dbReference type="InterPro" id="IPR032710">
    <property type="entry name" value="NTF2-like_dom_sf"/>
</dbReference>
<dbReference type="InterPro" id="IPR000391">
    <property type="entry name" value="Rng_hydr_dOase-bsu"/>
</dbReference>
<dbReference type="NCBIfam" id="NF042947">
    <property type="entry name" value="3PPDioc_HcaF"/>
    <property type="match status" value="1"/>
</dbReference>
<dbReference type="NCBIfam" id="NF007479">
    <property type="entry name" value="PRK10069.1"/>
    <property type="match status" value="1"/>
</dbReference>
<dbReference type="PANTHER" id="PTHR41534:SF2">
    <property type="entry name" value="3-PHENYLPROPIONATE_CINNAMIC ACID DIOXYGENASE SUBUNIT BETA"/>
    <property type="match status" value="1"/>
</dbReference>
<dbReference type="PANTHER" id="PTHR41534">
    <property type="entry name" value="BLR3401 PROTEIN"/>
    <property type="match status" value="1"/>
</dbReference>
<dbReference type="Pfam" id="PF00866">
    <property type="entry name" value="Ring_hydroxyl_B"/>
    <property type="match status" value="1"/>
</dbReference>
<dbReference type="SUPFAM" id="SSF54427">
    <property type="entry name" value="NTF2-like"/>
    <property type="match status" value="1"/>
</dbReference>
<organism>
    <name type="scientific">Escherichia coli O139:H28 (strain E24377A / ETEC)</name>
    <dbReference type="NCBI Taxonomy" id="331111"/>
    <lineage>
        <taxon>Bacteria</taxon>
        <taxon>Pseudomonadati</taxon>
        <taxon>Pseudomonadota</taxon>
        <taxon>Gammaproteobacteria</taxon>
        <taxon>Enterobacterales</taxon>
        <taxon>Enterobacteriaceae</taxon>
        <taxon>Escherichia</taxon>
    </lineage>
</organism>
<proteinExistence type="inferred from homology"/>
<reference key="1">
    <citation type="journal article" date="2008" name="J. Bacteriol.">
        <title>The pangenome structure of Escherichia coli: comparative genomic analysis of E. coli commensal and pathogenic isolates.</title>
        <authorList>
            <person name="Rasko D.A."/>
            <person name="Rosovitz M.J."/>
            <person name="Myers G.S.A."/>
            <person name="Mongodin E.F."/>
            <person name="Fricke W.F."/>
            <person name="Gajer P."/>
            <person name="Crabtree J."/>
            <person name="Sebaihia M."/>
            <person name="Thomson N.R."/>
            <person name="Chaudhuri R."/>
            <person name="Henderson I.R."/>
            <person name="Sperandio V."/>
            <person name="Ravel J."/>
        </authorList>
    </citation>
    <scope>NUCLEOTIDE SEQUENCE [LARGE SCALE GENOMIC DNA]</scope>
    <source>
        <strain>E24377A / ETEC</strain>
    </source>
</reference>
<evidence type="ECO:0000255" key="1">
    <source>
        <dbReference type="HAMAP-Rule" id="MF_01649"/>
    </source>
</evidence>
<name>HCAF_ECO24</name>
<protein>
    <recommendedName>
        <fullName evidence="1">3-phenylpropionate/cinnamic acid dioxygenase subunit beta</fullName>
        <ecNumber evidence="1">1.14.12.19</ecNumber>
    </recommendedName>
</protein>
<comment type="function">
    <text evidence="1">Part of the multicomponent 3-phenylpropionate dioxygenase. Converts 3-phenylpropionic acid (PP) and cinnamic acid (CI) into 3-phenylpropionate-dihydrodiol (PP-dihydrodiol) and cinnamic acid-dihydrodiol (CI-dihydrodiol), respectively.</text>
</comment>
<comment type="catalytic activity">
    <reaction evidence="1">
        <text>3-phenylpropanoate + NADH + O2 + H(+) = 3-(cis-5,6-dihydroxycyclohexa-1,3-dien-1-yl)propanoate + NAD(+)</text>
        <dbReference type="Rhea" id="RHEA:20357"/>
        <dbReference type="ChEBI" id="CHEBI:15378"/>
        <dbReference type="ChEBI" id="CHEBI:15379"/>
        <dbReference type="ChEBI" id="CHEBI:51057"/>
        <dbReference type="ChEBI" id="CHEBI:57540"/>
        <dbReference type="ChEBI" id="CHEBI:57945"/>
        <dbReference type="ChEBI" id="CHEBI:60087"/>
        <dbReference type="EC" id="1.14.12.19"/>
    </reaction>
</comment>
<comment type="catalytic activity">
    <reaction evidence="1">
        <text>(E)-cinnamate + NADH + O2 + H(+) = (2E)-3-(cis-5,6-dihydroxycyclohexa-1,3-dien-1-yl)prop-2-enoate + NAD(+)</text>
        <dbReference type="Rhea" id="RHEA:25058"/>
        <dbReference type="ChEBI" id="CHEBI:15378"/>
        <dbReference type="ChEBI" id="CHEBI:15379"/>
        <dbReference type="ChEBI" id="CHEBI:15669"/>
        <dbReference type="ChEBI" id="CHEBI:57540"/>
        <dbReference type="ChEBI" id="CHEBI:57945"/>
        <dbReference type="ChEBI" id="CHEBI:61451"/>
        <dbReference type="EC" id="1.14.12.19"/>
    </reaction>
</comment>
<comment type="pathway">
    <text evidence="1">Aromatic compound metabolism; 3-phenylpropanoate degradation.</text>
</comment>
<comment type="subunit">
    <text evidence="1">This dioxygenase system consists of four proteins: the two subunits of the hydroxylase component (HcaE and HcaF), a ferredoxin (HcaC) and a ferredoxin reductase (HcaD).</text>
</comment>
<comment type="similarity">
    <text evidence="1">Belongs to the bacterial ring-hydroxylating dioxygenase beta subunit family.</text>
</comment>
<accession>A7ZPY2</accession>